<comment type="function">
    <text evidence="1">Catalyzes the transfer of the diacylglyceryl group from phosphatidylglycerol to the sulfhydryl group of the N-terminal cysteine of a prolipoprotein, the first step in the formation of mature lipoproteins.</text>
</comment>
<comment type="catalytic activity">
    <reaction evidence="1">
        <text>L-cysteinyl-[prolipoprotein] + a 1,2-diacyl-sn-glycero-3-phospho-(1'-sn-glycerol) = an S-1,2-diacyl-sn-glyceryl-L-cysteinyl-[prolipoprotein] + sn-glycerol 1-phosphate + H(+)</text>
        <dbReference type="Rhea" id="RHEA:56712"/>
        <dbReference type="Rhea" id="RHEA-COMP:14679"/>
        <dbReference type="Rhea" id="RHEA-COMP:14680"/>
        <dbReference type="ChEBI" id="CHEBI:15378"/>
        <dbReference type="ChEBI" id="CHEBI:29950"/>
        <dbReference type="ChEBI" id="CHEBI:57685"/>
        <dbReference type="ChEBI" id="CHEBI:64716"/>
        <dbReference type="ChEBI" id="CHEBI:140658"/>
        <dbReference type="EC" id="2.5.1.145"/>
    </reaction>
</comment>
<comment type="pathway">
    <text evidence="1">Protein modification; lipoprotein biosynthesis (diacylglyceryl transfer).</text>
</comment>
<comment type="subcellular location">
    <subcellularLocation>
        <location evidence="1">Cell inner membrane</location>
        <topology evidence="1">Multi-pass membrane protein</topology>
    </subcellularLocation>
</comment>
<comment type="similarity">
    <text evidence="1">Belongs to the Lgt family.</text>
</comment>
<sequence>MPNYINYPSWLHPEVIQGIPITWYSLSYIFIILISYKFIWYQIQSDRIDIKKEDYETFMFSLVLGAILGGRLASTLVYDKSGIYYSHPWLILLPFDQDWNFTGFRGMAIHGGFLGAIIAPLITINTKLKNTNVQKYFLKLTDYGSIAFSSGYMLGRLANFANAELYGRVMKGGIIFPNAEPFDTNIPGVKEFASSVGIEILPHDLLINLPRVPSQLIEGFFEGPVTFMLLWFLFRKIKKYDGFIFGVYIMLYAFFRFFIEYLREPDKELGFIINYKPIKSLSDFSFLNISMGQILSLALMLSGLIWIIVTKKISDKKTKSILT</sequence>
<organism>
    <name type="scientific">Borreliella afzelii (strain PKo)</name>
    <name type="common">Borrelia afzelii</name>
    <dbReference type="NCBI Taxonomy" id="390236"/>
    <lineage>
        <taxon>Bacteria</taxon>
        <taxon>Pseudomonadati</taxon>
        <taxon>Spirochaetota</taxon>
        <taxon>Spirochaetia</taxon>
        <taxon>Spirochaetales</taxon>
        <taxon>Borreliaceae</taxon>
        <taxon>Borreliella</taxon>
    </lineage>
</organism>
<keyword id="KW-0997">Cell inner membrane</keyword>
<keyword id="KW-1003">Cell membrane</keyword>
<keyword id="KW-0472">Membrane</keyword>
<keyword id="KW-0808">Transferase</keyword>
<keyword id="KW-0812">Transmembrane</keyword>
<keyword id="KW-1133">Transmembrane helix</keyword>
<protein>
    <recommendedName>
        <fullName evidence="1">Phosphatidylglycerol--prolipoprotein diacylglyceryl transferase</fullName>
        <ecNumber evidence="1">2.5.1.145</ecNumber>
    </recommendedName>
</protein>
<name>LGT_BORAP</name>
<reference key="1">
    <citation type="journal article" date="2006" name="BMC Genomics">
        <title>Comparative genome analysis: selection pressure on the Borrelia vls cassettes is essential for infectivity.</title>
        <authorList>
            <person name="Gloeckner G."/>
            <person name="Schulte-Spechtel U."/>
            <person name="Schilhabel M."/>
            <person name="Felder M."/>
            <person name="Suehnel J."/>
            <person name="Wilske B."/>
            <person name="Platzer M."/>
        </authorList>
    </citation>
    <scope>NUCLEOTIDE SEQUENCE [LARGE SCALE GENOMIC DNA]</scope>
    <source>
        <strain>PKo</strain>
    </source>
</reference>
<reference key="2">
    <citation type="journal article" date="2011" name="J. Bacteriol.">
        <title>Whole-genome sequences of two Borrelia afzelii and two Borrelia garinii Lyme disease agent isolates.</title>
        <authorList>
            <person name="Casjens S.R."/>
            <person name="Mongodin E.F."/>
            <person name="Qiu W.G."/>
            <person name="Dunn J.J."/>
            <person name="Luft B.J."/>
            <person name="Fraser-Liggett C.M."/>
            <person name="Schutzer S.E."/>
        </authorList>
    </citation>
    <scope>NUCLEOTIDE SEQUENCE [LARGE SCALE GENOMIC DNA]</scope>
    <source>
        <strain>PKo</strain>
    </source>
</reference>
<proteinExistence type="inferred from homology"/>
<gene>
    <name evidence="1" type="primary">lgt</name>
    <name type="ordered locus">BAPKO_0369</name>
    <name type="ordered locus">BafPKo_0361</name>
</gene>
<evidence type="ECO:0000255" key="1">
    <source>
        <dbReference type="HAMAP-Rule" id="MF_01147"/>
    </source>
</evidence>
<feature type="chain" id="PRO_1000053392" description="Phosphatidylglycerol--prolipoprotein diacylglyceryl transferase">
    <location>
        <begin position="1"/>
        <end position="323"/>
    </location>
</feature>
<feature type="transmembrane region" description="Helical" evidence="1">
    <location>
        <begin position="15"/>
        <end position="35"/>
    </location>
</feature>
<feature type="transmembrane region" description="Helical" evidence="1">
    <location>
        <begin position="58"/>
        <end position="78"/>
    </location>
</feature>
<feature type="transmembrane region" description="Helical" evidence="1">
    <location>
        <begin position="106"/>
        <end position="126"/>
    </location>
</feature>
<feature type="transmembrane region" description="Helical" evidence="1">
    <location>
        <begin position="242"/>
        <end position="262"/>
    </location>
</feature>
<feature type="transmembrane region" description="Helical" evidence="1">
    <location>
        <begin position="289"/>
        <end position="309"/>
    </location>
</feature>
<feature type="binding site" evidence="1">
    <location>
        <position position="156"/>
    </location>
    <ligand>
        <name>a 1,2-diacyl-sn-glycero-3-phospho-(1'-sn-glycerol)</name>
        <dbReference type="ChEBI" id="CHEBI:64716"/>
    </ligand>
</feature>
<accession>Q0SNF2</accession>
<accession>G0IRS7</accession>
<dbReference type="EC" id="2.5.1.145" evidence="1"/>
<dbReference type="EMBL" id="CP000395">
    <property type="protein sequence ID" value="ABH01626.1"/>
    <property type="molecule type" value="Genomic_DNA"/>
</dbReference>
<dbReference type="EMBL" id="CP002933">
    <property type="protein sequence ID" value="AEL69587.1"/>
    <property type="molecule type" value="Genomic_DNA"/>
</dbReference>
<dbReference type="RefSeq" id="WP_011600977.1">
    <property type="nucleotide sequence ID" value="NZ_CP160066.1"/>
</dbReference>
<dbReference type="SMR" id="Q0SNF2"/>
<dbReference type="STRING" id="29518.BLA32_02505"/>
<dbReference type="GeneID" id="77265197"/>
<dbReference type="KEGG" id="baf:BAPKO_0369"/>
<dbReference type="KEGG" id="bafz:BafPKo_0361"/>
<dbReference type="PATRIC" id="fig|390236.22.peg.354"/>
<dbReference type="eggNOG" id="COG0682">
    <property type="taxonomic scope" value="Bacteria"/>
</dbReference>
<dbReference type="HOGENOM" id="CLU_013386_1_0_12"/>
<dbReference type="OrthoDB" id="871140at2"/>
<dbReference type="UniPathway" id="UPA00664"/>
<dbReference type="Proteomes" id="UP000005216">
    <property type="component" value="Chromosome"/>
</dbReference>
<dbReference type="GO" id="GO:0005886">
    <property type="term" value="C:plasma membrane"/>
    <property type="evidence" value="ECO:0007669"/>
    <property type="project" value="UniProtKB-SubCell"/>
</dbReference>
<dbReference type="GO" id="GO:0008961">
    <property type="term" value="F:phosphatidylglycerol-prolipoprotein diacylglyceryl transferase activity"/>
    <property type="evidence" value="ECO:0007669"/>
    <property type="project" value="UniProtKB-UniRule"/>
</dbReference>
<dbReference type="GO" id="GO:0042158">
    <property type="term" value="P:lipoprotein biosynthetic process"/>
    <property type="evidence" value="ECO:0007669"/>
    <property type="project" value="UniProtKB-UniRule"/>
</dbReference>
<dbReference type="HAMAP" id="MF_01147">
    <property type="entry name" value="Lgt"/>
    <property type="match status" value="1"/>
</dbReference>
<dbReference type="InterPro" id="IPR001640">
    <property type="entry name" value="Lgt"/>
</dbReference>
<dbReference type="NCBIfam" id="TIGR00544">
    <property type="entry name" value="lgt"/>
    <property type="match status" value="1"/>
</dbReference>
<dbReference type="PANTHER" id="PTHR30589:SF0">
    <property type="entry name" value="PHOSPHATIDYLGLYCEROL--PROLIPOPROTEIN DIACYLGLYCERYL TRANSFERASE"/>
    <property type="match status" value="1"/>
</dbReference>
<dbReference type="PANTHER" id="PTHR30589">
    <property type="entry name" value="PROLIPOPROTEIN DIACYLGLYCERYL TRANSFERASE"/>
    <property type="match status" value="1"/>
</dbReference>
<dbReference type="Pfam" id="PF01790">
    <property type="entry name" value="LGT"/>
    <property type="match status" value="1"/>
</dbReference>
<dbReference type="PROSITE" id="PS01311">
    <property type="entry name" value="LGT"/>
    <property type="match status" value="1"/>
</dbReference>